<gene>
    <name type="ORF">AAEL008605</name>
</gene>
<feature type="chain" id="PRO_0000413106" description="Inosine triphosphate pyrophosphatase">
    <location>
        <begin position="1"/>
        <end position="188"/>
    </location>
</feature>
<feature type="binding site" evidence="1">
    <location>
        <begin position="9"/>
        <end position="14"/>
    </location>
    <ligand>
        <name>ITP</name>
        <dbReference type="ChEBI" id="CHEBI:61402"/>
    </ligand>
</feature>
<feature type="binding site" evidence="1">
    <location>
        <position position="39"/>
    </location>
    <ligand>
        <name>Mg(2+)</name>
        <dbReference type="ChEBI" id="CHEBI:18420"/>
    </ligand>
</feature>
<feature type="binding site" evidence="1">
    <location>
        <position position="51"/>
    </location>
    <ligand>
        <name>ITP</name>
        <dbReference type="ChEBI" id="CHEBI:61402"/>
    </ligand>
</feature>
<feature type="binding site" evidence="1">
    <location>
        <begin position="67"/>
        <end position="68"/>
    </location>
    <ligand>
        <name>ITP</name>
        <dbReference type="ChEBI" id="CHEBI:61402"/>
    </ligand>
</feature>
<feature type="binding site" evidence="1">
    <location>
        <position position="84"/>
    </location>
    <ligand>
        <name>ITP</name>
        <dbReference type="ChEBI" id="CHEBI:61402"/>
    </ligand>
</feature>
<feature type="binding site" evidence="1">
    <location>
        <begin position="143"/>
        <end position="146"/>
    </location>
    <ligand>
        <name>ITP</name>
        <dbReference type="ChEBI" id="CHEBI:61402"/>
    </ligand>
</feature>
<feature type="binding site" evidence="1">
    <location>
        <position position="166"/>
    </location>
    <ligand>
        <name>ITP</name>
        <dbReference type="ChEBI" id="CHEBI:61402"/>
    </ligand>
</feature>
<feature type="binding site" evidence="1">
    <location>
        <begin position="171"/>
        <end position="172"/>
    </location>
    <ligand>
        <name>ITP</name>
        <dbReference type="ChEBI" id="CHEBI:61402"/>
    </ligand>
</feature>
<dbReference type="EC" id="3.6.1.66" evidence="1"/>
<dbReference type="EMBL" id="CH477519">
    <property type="protein sequence ID" value="EAT39613.1"/>
    <property type="molecule type" value="Genomic_DNA"/>
</dbReference>
<dbReference type="SMR" id="Q16YB3"/>
<dbReference type="FunCoup" id="Q16YB3">
    <property type="interactions" value="1493"/>
</dbReference>
<dbReference type="STRING" id="7159.Q16YB3"/>
<dbReference type="PaxDb" id="7159-AAEL008605-PA"/>
<dbReference type="EnsemblMetazoa" id="AAEL008605-RA">
    <property type="protein sequence ID" value="AAEL008605-PA"/>
    <property type="gene ID" value="AAEL008605"/>
</dbReference>
<dbReference type="GeneID" id="5570828"/>
<dbReference type="KEGG" id="aag:5570828"/>
<dbReference type="VEuPathDB" id="VectorBase:AAEL008605"/>
<dbReference type="eggNOG" id="KOG3222">
    <property type="taxonomic scope" value="Eukaryota"/>
</dbReference>
<dbReference type="HOGENOM" id="CLU_082080_1_1_1"/>
<dbReference type="InParanoid" id="Q16YB3"/>
<dbReference type="OMA" id="YDPIFQP"/>
<dbReference type="OrthoDB" id="6288734at2759"/>
<dbReference type="PhylomeDB" id="Q16YB3"/>
<dbReference type="Proteomes" id="UP000008820">
    <property type="component" value="Chromosome 2"/>
</dbReference>
<dbReference type="Proteomes" id="UP000682892">
    <property type="component" value="Unassembled WGS sequence"/>
</dbReference>
<dbReference type="GO" id="GO:0005737">
    <property type="term" value="C:cytoplasm"/>
    <property type="evidence" value="ECO:0007669"/>
    <property type="project" value="UniProtKB-SubCell"/>
</dbReference>
<dbReference type="GO" id="GO:0035870">
    <property type="term" value="F:dITP diphosphatase activity"/>
    <property type="evidence" value="ECO:0007669"/>
    <property type="project" value="RHEA"/>
</dbReference>
<dbReference type="GO" id="GO:0036220">
    <property type="term" value="F:ITP diphosphatase activity"/>
    <property type="evidence" value="ECO:0007669"/>
    <property type="project" value="RHEA"/>
</dbReference>
<dbReference type="GO" id="GO:0046872">
    <property type="term" value="F:metal ion binding"/>
    <property type="evidence" value="ECO:0007669"/>
    <property type="project" value="UniProtKB-KW"/>
</dbReference>
<dbReference type="GO" id="GO:0000166">
    <property type="term" value="F:nucleotide binding"/>
    <property type="evidence" value="ECO:0007669"/>
    <property type="project" value="UniProtKB-KW"/>
</dbReference>
<dbReference type="GO" id="GO:0036222">
    <property type="term" value="F:XTP diphosphatase activity"/>
    <property type="evidence" value="ECO:0007669"/>
    <property type="project" value="RHEA"/>
</dbReference>
<dbReference type="GO" id="GO:0009204">
    <property type="term" value="P:deoxyribonucleoside triphosphate catabolic process"/>
    <property type="evidence" value="ECO:0007669"/>
    <property type="project" value="UniProtKB-UniRule"/>
</dbReference>
<dbReference type="GO" id="GO:0009117">
    <property type="term" value="P:nucleotide metabolic process"/>
    <property type="evidence" value="ECO:0007669"/>
    <property type="project" value="UniProtKB-KW"/>
</dbReference>
<dbReference type="CDD" id="cd00515">
    <property type="entry name" value="HAM1"/>
    <property type="match status" value="1"/>
</dbReference>
<dbReference type="FunFam" id="3.90.950.10:FF:000003">
    <property type="entry name" value="Inosine triphosphate pyrophosphatase"/>
    <property type="match status" value="1"/>
</dbReference>
<dbReference type="Gene3D" id="3.90.950.10">
    <property type="match status" value="1"/>
</dbReference>
<dbReference type="HAMAP" id="MF_03148">
    <property type="entry name" value="HAM1_NTPase"/>
    <property type="match status" value="1"/>
</dbReference>
<dbReference type="InterPro" id="IPR027502">
    <property type="entry name" value="ITPase"/>
</dbReference>
<dbReference type="InterPro" id="IPR029001">
    <property type="entry name" value="ITPase-like_fam"/>
</dbReference>
<dbReference type="InterPro" id="IPR002637">
    <property type="entry name" value="RdgB/HAM1"/>
</dbReference>
<dbReference type="NCBIfam" id="TIGR00042">
    <property type="entry name" value="RdgB/HAM1 family non-canonical purine NTP pyrophosphatase"/>
    <property type="match status" value="1"/>
</dbReference>
<dbReference type="PANTHER" id="PTHR11067:SF9">
    <property type="entry name" value="INOSINE TRIPHOSPHATE PYROPHOSPHATASE"/>
    <property type="match status" value="1"/>
</dbReference>
<dbReference type="PANTHER" id="PTHR11067">
    <property type="entry name" value="INOSINE TRIPHOSPHATE PYROPHOSPHATASE/HAM1 PROTEIN"/>
    <property type="match status" value="1"/>
</dbReference>
<dbReference type="Pfam" id="PF01725">
    <property type="entry name" value="Ham1p_like"/>
    <property type="match status" value="1"/>
</dbReference>
<dbReference type="SUPFAM" id="SSF52972">
    <property type="entry name" value="ITPase-like"/>
    <property type="match status" value="1"/>
</dbReference>
<proteinExistence type="inferred from homology"/>
<sequence>MTRPISFVTGNAKKLEEVRAILGPKFPRELLPVKLDLPELQGEIDDICRKKCLEAARRVKGPVLVEDTCLCFNALKGLPGPYIKWFLEKLEPEGLHKLLDGWEDKSAEAVCTFAYAPGEDAEVILFQGRTQGDIVYPRGCRDFGWDPIFQPKGYDKSYAELPKEKKNEISHRFRALNKLRDYFVAENQ</sequence>
<protein>
    <recommendedName>
        <fullName evidence="1">Inosine triphosphate pyrophosphatase</fullName>
        <shortName evidence="1">ITPase</shortName>
        <shortName evidence="1">Inosine triphosphatase</shortName>
        <ecNumber evidence="1">3.6.1.66</ecNumber>
    </recommendedName>
    <alternativeName>
        <fullName evidence="1">Non-canonical purine NTP pyrophosphatase</fullName>
    </alternativeName>
    <alternativeName>
        <fullName evidence="1">Non-standard purine NTP pyrophosphatase</fullName>
    </alternativeName>
    <alternativeName>
        <fullName evidence="1">Nucleoside-triphosphate diphosphatase</fullName>
    </alternativeName>
    <alternativeName>
        <fullName evidence="1">Nucleoside-triphosphate pyrophosphatase</fullName>
        <shortName evidence="1">NTPase</shortName>
    </alternativeName>
    <alternativeName>
        <fullName evidence="1">XTP/dITP diphosphatase</fullName>
    </alternativeName>
</protein>
<name>ITPA_AEDAE</name>
<reference key="1">
    <citation type="journal article" date="2007" name="Science">
        <title>Genome sequence of Aedes aegypti, a major arbovirus vector.</title>
        <authorList>
            <person name="Nene V."/>
            <person name="Wortman J.R."/>
            <person name="Lawson D."/>
            <person name="Haas B.J."/>
            <person name="Kodira C.D."/>
            <person name="Tu Z.J."/>
            <person name="Loftus B.J."/>
            <person name="Xi Z."/>
            <person name="Megy K."/>
            <person name="Grabherr M."/>
            <person name="Ren Q."/>
            <person name="Zdobnov E.M."/>
            <person name="Lobo N.F."/>
            <person name="Campbell K.S."/>
            <person name="Brown S.E."/>
            <person name="Bonaldo M.F."/>
            <person name="Zhu J."/>
            <person name="Sinkins S.P."/>
            <person name="Hogenkamp D.G."/>
            <person name="Amedeo P."/>
            <person name="Arensburger P."/>
            <person name="Atkinson P.W."/>
            <person name="Bidwell S.L."/>
            <person name="Biedler J."/>
            <person name="Birney E."/>
            <person name="Bruggner R.V."/>
            <person name="Costas J."/>
            <person name="Coy M.R."/>
            <person name="Crabtree J."/>
            <person name="Crawford M."/>
            <person name="DeBruyn B."/>
            <person name="DeCaprio D."/>
            <person name="Eiglmeier K."/>
            <person name="Eisenstadt E."/>
            <person name="El-Dorry H."/>
            <person name="Gelbart W.M."/>
            <person name="Gomes S.L."/>
            <person name="Hammond M."/>
            <person name="Hannick L.I."/>
            <person name="Hogan J.R."/>
            <person name="Holmes M.H."/>
            <person name="Jaffe D."/>
            <person name="Johnston S.J."/>
            <person name="Kennedy R.C."/>
            <person name="Koo H."/>
            <person name="Kravitz S."/>
            <person name="Kriventseva E.V."/>
            <person name="Kulp D."/>
            <person name="Labutti K."/>
            <person name="Lee E."/>
            <person name="Li S."/>
            <person name="Lovin D.D."/>
            <person name="Mao C."/>
            <person name="Mauceli E."/>
            <person name="Menck C.F."/>
            <person name="Miller J.R."/>
            <person name="Montgomery P."/>
            <person name="Mori A."/>
            <person name="Nascimento A.L."/>
            <person name="Naveira H.F."/>
            <person name="Nusbaum C."/>
            <person name="O'Leary S.B."/>
            <person name="Orvis J."/>
            <person name="Pertea M."/>
            <person name="Quesneville H."/>
            <person name="Reidenbach K.R."/>
            <person name="Rogers Y.-H.C."/>
            <person name="Roth C.W."/>
            <person name="Schneider J.R."/>
            <person name="Schatz M."/>
            <person name="Shumway M."/>
            <person name="Stanke M."/>
            <person name="Stinson E.O."/>
            <person name="Tubio J.M.C."/>
            <person name="Vanzee J.P."/>
            <person name="Verjovski-Almeida S."/>
            <person name="Werner D."/>
            <person name="White O.R."/>
            <person name="Wyder S."/>
            <person name="Zeng Q."/>
            <person name="Zhao Q."/>
            <person name="Zhao Y."/>
            <person name="Hill C.A."/>
            <person name="Raikhel A.S."/>
            <person name="Soares M.B."/>
            <person name="Knudson D.L."/>
            <person name="Lee N.H."/>
            <person name="Galagan J."/>
            <person name="Salzberg S.L."/>
            <person name="Paulsen I.T."/>
            <person name="Dimopoulos G."/>
            <person name="Collins F.H."/>
            <person name="Bruce B."/>
            <person name="Fraser-Liggett C.M."/>
            <person name="Severson D.W."/>
        </authorList>
    </citation>
    <scope>NUCLEOTIDE SEQUENCE [LARGE SCALE GENOMIC DNA]</scope>
    <source>
        <strain>LVPib12</strain>
    </source>
</reference>
<comment type="function">
    <text evidence="1">Pyrophosphatase that hydrolyzes non-canonical purine nucleotides such as inosine triphosphate (ITP), deoxyinosine triphosphate (dITP) or xanthosine 5'-triphosphate (XTP) to their respective monophosphate derivatives. The enzyme does not distinguish between the deoxy- and ribose forms. Probably excludes non-canonical purines from RNA and DNA precursor pools, thus preventing their incorporation into RNA and DNA and avoiding chromosomal lesions.</text>
</comment>
<comment type="catalytic activity">
    <reaction evidence="1">
        <text>ITP + H2O = IMP + diphosphate + H(+)</text>
        <dbReference type="Rhea" id="RHEA:29399"/>
        <dbReference type="ChEBI" id="CHEBI:15377"/>
        <dbReference type="ChEBI" id="CHEBI:15378"/>
        <dbReference type="ChEBI" id="CHEBI:33019"/>
        <dbReference type="ChEBI" id="CHEBI:58053"/>
        <dbReference type="ChEBI" id="CHEBI:61402"/>
        <dbReference type="EC" id="3.6.1.66"/>
    </reaction>
    <physiologicalReaction direction="left-to-right" evidence="1">
        <dbReference type="Rhea" id="RHEA:29400"/>
    </physiologicalReaction>
</comment>
<comment type="catalytic activity">
    <reaction evidence="1">
        <text>dITP + H2O = dIMP + diphosphate + H(+)</text>
        <dbReference type="Rhea" id="RHEA:28342"/>
        <dbReference type="ChEBI" id="CHEBI:15377"/>
        <dbReference type="ChEBI" id="CHEBI:15378"/>
        <dbReference type="ChEBI" id="CHEBI:33019"/>
        <dbReference type="ChEBI" id="CHEBI:61194"/>
        <dbReference type="ChEBI" id="CHEBI:61382"/>
        <dbReference type="EC" id="3.6.1.66"/>
    </reaction>
    <physiologicalReaction direction="left-to-right" evidence="1">
        <dbReference type="Rhea" id="RHEA:28343"/>
    </physiologicalReaction>
</comment>
<comment type="catalytic activity">
    <reaction evidence="1">
        <text>XTP + H2O = XMP + diphosphate + H(+)</text>
        <dbReference type="Rhea" id="RHEA:28610"/>
        <dbReference type="ChEBI" id="CHEBI:15377"/>
        <dbReference type="ChEBI" id="CHEBI:15378"/>
        <dbReference type="ChEBI" id="CHEBI:33019"/>
        <dbReference type="ChEBI" id="CHEBI:57464"/>
        <dbReference type="ChEBI" id="CHEBI:61314"/>
        <dbReference type="EC" id="3.6.1.66"/>
    </reaction>
    <physiologicalReaction direction="left-to-right" evidence="1">
        <dbReference type="Rhea" id="RHEA:28611"/>
    </physiologicalReaction>
</comment>
<comment type="cofactor">
    <cofactor evidence="1">
        <name>Mg(2+)</name>
        <dbReference type="ChEBI" id="CHEBI:18420"/>
    </cofactor>
    <cofactor evidence="1">
        <name>Mn(2+)</name>
        <dbReference type="ChEBI" id="CHEBI:29035"/>
    </cofactor>
    <text evidence="1">Binds 1 divalent metal cation per subunit; can use either Mg(2+) or Mn(2+).</text>
</comment>
<comment type="subunit">
    <text evidence="1">Homodimer.</text>
</comment>
<comment type="subcellular location">
    <subcellularLocation>
        <location evidence="1">Cytoplasm</location>
    </subcellularLocation>
</comment>
<comment type="similarity">
    <text evidence="1">Belongs to the HAM1 NTPase family.</text>
</comment>
<keyword id="KW-0963">Cytoplasm</keyword>
<keyword id="KW-0378">Hydrolase</keyword>
<keyword id="KW-0460">Magnesium</keyword>
<keyword id="KW-0464">Manganese</keyword>
<keyword id="KW-0479">Metal-binding</keyword>
<keyword id="KW-0546">Nucleotide metabolism</keyword>
<keyword id="KW-0547">Nucleotide-binding</keyword>
<keyword id="KW-1185">Reference proteome</keyword>
<organism>
    <name type="scientific">Aedes aegypti</name>
    <name type="common">Yellowfever mosquito</name>
    <name type="synonym">Culex aegypti</name>
    <dbReference type="NCBI Taxonomy" id="7159"/>
    <lineage>
        <taxon>Eukaryota</taxon>
        <taxon>Metazoa</taxon>
        <taxon>Ecdysozoa</taxon>
        <taxon>Arthropoda</taxon>
        <taxon>Hexapoda</taxon>
        <taxon>Insecta</taxon>
        <taxon>Pterygota</taxon>
        <taxon>Neoptera</taxon>
        <taxon>Endopterygota</taxon>
        <taxon>Diptera</taxon>
        <taxon>Nematocera</taxon>
        <taxon>Culicoidea</taxon>
        <taxon>Culicidae</taxon>
        <taxon>Culicinae</taxon>
        <taxon>Aedini</taxon>
        <taxon>Aedes</taxon>
        <taxon>Stegomyia</taxon>
    </lineage>
</organism>
<accession>Q16YB3</accession>
<evidence type="ECO:0000255" key="1">
    <source>
        <dbReference type="HAMAP-Rule" id="MF_03148"/>
    </source>
</evidence>